<proteinExistence type="evidence at protein level"/>
<dbReference type="EMBL" id="AB006455">
    <property type="protein sequence ID" value="BAA22218.1"/>
    <property type="molecule type" value="mRNA"/>
</dbReference>
<dbReference type="SMR" id="O15974"/>
<dbReference type="GlyCosmos" id="O15974">
    <property type="glycosylation" value="1 site, No reported glycans"/>
</dbReference>
<dbReference type="OrthoDB" id="2101615at2759"/>
<dbReference type="GO" id="GO:0005886">
    <property type="term" value="C:plasma membrane"/>
    <property type="evidence" value="ECO:0000250"/>
    <property type="project" value="UniProtKB"/>
</dbReference>
<dbReference type="GO" id="GO:0004930">
    <property type="term" value="F:G protein-coupled receptor activity"/>
    <property type="evidence" value="ECO:0007669"/>
    <property type="project" value="UniProtKB-KW"/>
</dbReference>
<dbReference type="GO" id="GO:0009881">
    <property type="term" value="F:photoreceptor activity"/>
    <property type="evidence" value="ECO:0007669"/>
    <property type="project" value="UniProtKB-KW"/>
</dbReference>
<dbReference type="GO" id="GO:0007602">
    <property type="term" value="P:phototransduction"/>
    <property type="evidence" value="ECO:0007669"/>
    <property type="project" value="UniProtKB-KW"/>
</dbReference>
<dbReference type="GO" id="GO:0007601">
    <property type="term" value="P:visual perception"/>
    <property type="evidence" value="ECO:0007669"/>
    <property type="project" value="UniProtKB-KW"/>
</dbReference>
<dbReference type="CDD" id="cd15074">
    <property type="entry name" value="7tmA_Opsin5_neuropsin"/>
    <property type="match status" value="1"/>
</dbReference>
<dbReference type="FunFam" id="1.20.1070.10:FF:000219">
    <property type="entry name" value="Opsin 5-like 2"/>
    <property type="match status" value="1"/>
</dbReference>
<dbReference type="Gene3D" id="1.20.1070.10">
    <property type="entry name" value="Rhodopsin 7-helix transmembrane proteins"/>
    <property type="match status" value="1"/>
</dbReference>
<dbReference type="InterPro" id="IPR050125">
    <property type="entry name" value="GPCR_opsins"/>
</dbReference>
<dbReference type="InterPro" id="IPR000276">
    <property type="entry name" value="GPCR_Rhodpsn"/>
</dbReference>
<dbReference type="InterPro" id="IPR017452">
    <property type="entry name" value="GPCR_Rhodpsn_7TM"/>
</dbReference>
<dbReference type="InterPro" id="IPR002962">
    <property type="entry name" value="Peropsin"/>
</dbReference>
<dbReference type="InterPro" id="IPR027430">
    <property type="entry name" value="Retinal_BS"/>
</dbReference>
<dbReference type="PANTHER" id="PTHR24240">
    <property type="entry name" value="OPSIN"/>
    <property type="match status" value="1"/>
</dbReference>
<dbReference type="Pfam" id="PF00001">
    <property type="entry name" value="7tm_1"/>
    <property type="match status" value="1"/>
</dbReference>
<dbReference type="PRINTS" id="PR00237">
    <property type="entry name" value="GPCRRHODOPSN"/>
</dbReference>
<dbReference type="PRINTS" id="PR01244">
    <property type="entry name" value="PEROPSIN"/>
</dbReference>
<dbReference type="SUPFAM" id="SSF81321">
    <property type="entry name" value="Family A G protein-coupled receptor-like"/>
    <property type="match status" value="1"/>
</dbReference>
<dbReference type="PROSITE" id="PS50262">
    <property type="entry name" value="G_PROTEIN_RECEP_F1_2"/>
    <property type="match status" value="1"/>
</dbReference>
<dbReference type="PROSITE" id="PS00238">
    <property type="entry name" value="OPSIN"/>
    <property type="match status" value="1"/>
</dbReference>
<feature type="chain" id="PRO_0000197736" description="Rhodopsin, G0-coupled">
    <location>
        <begin position="1"/>
        <end position="399"/>
    </location>
</feature>
<feature type="topological domain" description="Extracellular">
    <location>
        <begin position="1"/>
        <end position="17"/>
    </location>
</feature>
<feature type="transmembrane region" description="Helical; Name=1" evidence="2">
    <location>
        <begin position="18"/>
        <end position="43"/>
    </location>
</feature>
<feature type="topological domain" description="Cytoplasmic">
    <location>
        <begin position="44"/>
        <end position="55"/>
    </location>
</feature>
<feature type="transmembrane region" description="Helical; Name=2" evidence="2">
    <location>
        <begin position="56"/>
        <end position="81"/>
    </location>
</feature>
<feature type="topological domain" description="Extracellular">
    <location>
        <begin position="82"/>
        <end position="95"/>
    </location>
</feature>
<feature type="transmembrane region" description="Helical; Name=3" evidence="2">
    <location>
        <begin position="96"/>
        <end position="115"/>
    </location>
</feature>
<feature type="topological domain" description="Cytoplasmic">
    <location>
        <begin position="116"/>
        <end position="134"/>
    </location>
</feature>
<feature type="transmembrane region" description="Helical; Name=4" evidence="2">
    <location>
        <begin position="135"/>
        <end position="158"/>
    </location>
</feature>
<feature type="topological domain" description="Extracellular">
    <location>
        <begin position="159"/>
        <end position="182"/>
    </location>
</feature>
<feature type="transmembrane region" description="Helical; Name=5" evidence="2">
    <location>
        <begin position="183"/>
        <end position="210"/>
    </location>
</feature>
<feature type="topological domain" description="Cytoplasmic">
    <location>
        <begin position="211"/>
        <end position="240"/>
    </location>
</feature>
<feature type="transmembrane region" description="Helical; Name=6" evidence="2">
    <location>
        <begin position="241"/>
        <end position="263"/>
    </location>
</feature>
<feature type="topological domain" description="Extracellular">
    <location>
        <begin position="264"/>
        <end position="271"/>
    </location>
</feature>
<feature type="transmembrane region" description="Helical; Name=7" evidence="2">
    <location>
        <begin position="272"/>
        <end position="295"/>
    </location>
</feature>
<feature type="topological domain" description="Cytoplasmic">
    <location>
        <begin position="296"/>
        <end position="399"/>
    </location>
</feature>
<feature type="modified residue" description="N6-(retinylidene)lysine">
    <location>
        <position position="282"/>
    </location>
</feature>
<feature type="glycosylation site" description="N-linked (GlcNAc...) asparagine" evidence="2">
    <location>
        <position position="6"/>
    </location>
</feature>
<feature type="disulfide bond" evidence="3">
    <location>
        <begin position="92"/>
        <end position="169"/>
    </location>
</feature>
<organism>
    <name type="scientific">Mizuhopecten yessoensis</name>
    <name type="common">Japanese scallop</name>
    <name type="synonym">Patinopecten yessoensis</name>
    <dbReference type="NCBI Taxonomy" id="6573"/>
    <lineage>
        <taxon>Eukaryota</taxon>
        <taxon>Metazoa</taxon>
        <taxon>Spiralia</taxon>
        <taxon>Lophotrochozoa</taxon>
        <taxon>Mollusca</taxon>
        <taxon>Bivalvia</taxon>
        <taxon>Autobranchia</taxon>
        <taxon>Pteriomorphia</taxon>
        <taxon>Pectinida</taxon>
        <taxon>Pectinoidea</taxon>
        <taxon>Pectinidae</taxon>
        <taxon>Mizuhopecten</taxon>
    </lineage>
</organism>
<name>OPSD2_MIZYE</name>
<evidence type="ECO:0000250" key="1"/>
<evidence type="ECO:0000255" key="2"/>
<evidence type="ECO:0000255" key="3">
    <source>
        <dbReference type="PROSITE-ProRule" id="PRU00521"/>
    </source>
</evidence>
<reference key="1">
    <citation type="journal article" date="1997" name="J. Biol. Chem.">
        <title>A novel Go-mediated phototransduction cascade in scallop visual cells.</title>
        <authorList>
            <person name="Kojima D."/>
            <person name="Terakita A."/>
            <person name="Ishikawa T."/>
            <person name="Tsukahara Y."/>
            <person name="Maeda A."/>
            <person name="Shichida Y."/>
        </authorList>
    </citation>
    <scope>NUCLEOTIDE SEQUENCE [MRNA]</scope>
    <source>
        <tissue>Eye</tissue>
    </source>
</reference>
<protein>
    <recommendedName>
        <fullName>Rhodopsin, G0-coupled</fullName>
    </recommendedName>
    <alternativeName>
        <fullName>G0-rhodopsin</fullName>
    </alternativeName>
</protein>
<keyword id="KW-0157">Chromophore</keyword>
<keyword id="KW-1015">Disulfide bond</keyword>
<keyword id="KW-0297">G-protein coupled receptor</keyword>
<keyword id="KW-0325">Glycoprotein</keyword>
<keyword id="KW-0472">Membrane</keyword>
<keyword id="KW-0597">Phosphoprotein</keyword>
<keyword id="KW-0600">Photoreceptor protein</keyword>
<keyword id="KW-0675">Receptor</keyword>
<keyword id="KW-0681">Retinal protein</keyword>
<keyword id="KW-0716">Sensory transduction</keyword>
<keyword id="KW-0807">Transducer</keyword>
<keyword id="KW-0812">Transmembrane</keyword>
<keyword id="KW-1133">Transmembrane helix</keyword>
<keyword id="KW-0844">Vision</keyword>
<gene>
    <name type="primary">SCOP2</name>
</gene>
<sequence length="399" mass="45097">MPFPLNRTDTALVISPSEFRIIGIFISICCIIGVLGNLLIIIVFAKRRSVRRPINFFVLNLAVSDLIVALLGYPMTAASAFSNRWIFDNIGCKIYAFLCFNSGVISIMTHAALSFCRYIIICQYGYRKKITQTTVLRTLFSIWSFAMFWTLSPLFGWSSYVIEVVPVSCSVNWYGHGLGDVSYTISVIVAVYVFPLSIIVFSYGMILQEKVCKDSRKNGIRAQQRYTPRFIQDIEQRVTFISFLMMAAFMVAWTPYAIMSALAIGSFNVENSFAALPTLFAKASCAYNPFIYAFTNANFRDTVVEIMAPWTTRRVGVSTLPWPQVTYYPRRRTSAVNTTDIEFPDDNIFIVNSSVNGPTVKREKIVQRNPINVRLGIKIEPRDSRAATENTFTADFSVI</sequence>
<accession>O15974</accession>
<comment type="function">
    <text>Visual pigments are the light-absorbing molecules that mediate vision. They consist of an apoprotein, opsin, covalently linked to cis-retinal.</text>
</comment>
<comment type="subcellular location">
    <subcellularLocation>
        <location>Membrane</location>
        <topology>Multi-pass membrane protein</topology>
    </subcellularLocation>
</comment>
<comment type="tissue specificity">
    <text>Retina. Expressed in the hyperpolarizing cell layer of the photoreceptor cells with its photoreceptive region adjacent to the lens.</text>
</comment>
<comment type="PTM">
    <text evidence="1">Phosphorylated on some or all of the serine and threonine residues present in the C-terminal region.</text>
</comment>
<comment type="similarity">
    <text evidence="3">Belongs to the G-protein coupled receptor 1 family. Opsin subfamily.</text>
</comment>